<dbReference type="EMBL" id="CP000813">
    <property type="protein sequence ID" value="ABV61429.1"/>
    <property type="molecule type" value="Genomic_DNA"/>
</dbReference>
<dbReference type="RefSeq" id="WP_012009270.1">
    <property type="nucleotide sequence ID" value="NZ_VEIS01000001.1"/>
</dbReference>
<dbReference type="SMR" id="A8FB12"/>
<dbReference type="STRING" id="315750.BPUM_0743"/>
<dbReference type="GeneID" id="5619988"/>
<dbReference type="KEGG" id="bpu:BPUM_0743"/>
<dbReference type="eggNOG" id="COG0217">
    <property type="taxonomic scope" value="Bacteria"/>
</dbReference>
<dbReference type="HOGENOM" id="CLU_062974_2_0_9"/>
<dbReference type="OrthoDB" id="9781053at2"/>
<dbReference type="Proteomes" id="UP000001355">
    <property type="component" value="Chromosome"/>
</dbReference>
<dbReference type="GO" id="GO:0005829">
    <property type="term" value="C:cytosol"/>
    <property type="evidence" value="ECO:0007669"/>
    <property type="project" value="TreeGrafter"/>
</dbReference>
<dbReference type="GO" id="GO:0003677">
    <property type="term" value="F:DNA binding"/>
    <property type="evidence" value="ECO:0007669"/>
    <property type="project" value="UniProtKB-UniRule"/>
</dbReference>
<dbReference type="GO" id="GO:0006355">
    <property type="term" value="P:regulation of DNA-templated transcription"/>
    <property type="evidence" value="ECO:0007669"/>
    <property type="project" value="UniProtKB-UniRule"/>
</dbReference>
<dbReference type="FunFam" id="1.10.10.200:FF:000003">
    <property type="entry name" value="Probable transcriptional regulatory protein YeeN"/>
    <property type="match status" value="1"/>
</dbReference>
<dbReference type="FunFam" id="3.30.70.980:FF:000004">
    <property type="entry name" value="Probable transcriptional regulatory protein YeeN"/>
    <property type="match status" value="1"/>
</dbReference>
<dbReference type="Gene3D" id="1.10.10.200">
    <property type="match status" value="1"/>
</dbReference>
<dbReference type="Gene3D" id="3.30.70.980">
    <property type="match status" value="2"/>
</dbReference>
<dbReference type="HAMAP" id="MF_00693">
    <property type="entry name" value="Transcrip_reg_TACO1"/>
    <property type="match status" value="1"/>
</dbReference>
<dbReference type="HAMAP" id="MF_00918">
    <property type="entry name" value="Transcrip_reg_TACO1_YeeN"/>
    <property type="match status" value="1"/>
</dbReference>
<dbReference type="InterPro" id="IPR017856">
    <property type="entry name" value="Integrase-like_N"/>
</dbReference>
<dbReference type="InterPro" id="IPR048300">
    <property type="entry name" value="TACO1_YebC-like_2nd/3rd_dom"/>
</dbReference>
<dbReference type="InterPro" id="IPR049083">
    <property type="entry name" value="TACO1_YebC_N"/>
</dbReference>
<dbReference type="InterPro" id="IPR002876">
    <property type="entry name" value="Transcrip_reg_TACO1-like"/>
</dbReference>
<dbReference type="InterPro" id="IPR026564">
    <property type="entry name" value="Transcrip_reg_TACO1-like_dom3"/>
</dbReference>
<dbReference type="InterPro" id="IPR026562">
    <property type="entry name" value="Transcrip_reg_TACO1_YeeN"/>
</dbReference>
<dbReference type="InterPro" id="IPR029072">
    <property type="entry name" value="YebC-like"/>
</dbReference>
<dbReference type="NCBIfam" id="NF001030">
    <property type="entry name" value="PRK00110.1"/>
    <property type="match status" value="1"/>
</dbReference>
<dbReference type="NCBIfam" id="NF009044">
    <property type="entry name" value="PRK12378.1"/>
    <property type="match status" value="1"/>
</dbReference>
<dbReference type="NCBIfam" id="TIGR01033">
    <property type="entry name" value="YebC/PmpR family DNA-binding transcriptional regulator"/>
    <property type="match status" value="1"/>
</dbReference>
<dbReference type="PANTHER" id="PTHR12532">
    <property type="entry name" value="TRANSLATIONAL ACTIVATOR OF CYTOCHROME C OXIDASE 1"/>
    <property type="match status" value="1"/>
</dbReference>
<dbReference type="PANTHER" id="PTHR12532:SF0">
    <property type="entry name" value="TRANSLATIONAL ACTIVATOR OF CYTOCHROME C OXIDASE 1"/>
    <property type="match status" value="1"/>
</dbReference>
<dbReference type="Pfam" id="PF20772">
    <property type="entry name" value="TACO1_YebC_N"/>
    <property type="match status" value="1"/>
</dbReference>
<dbReference type="Pfam" id="PF01709">
    <property type="entry name" value="Transcrip_reg"/>
    <property type="match status" value="1"/>
</dbReference>
<dbReference type="SUPFAM" id="SSF75625">
    <property type="entry name" value="YebC-like"/>
    <property type="match status" value="1"/>
</dbReference>
<gene>
    <name type="ordered locus">BPUM_0743</name>
</gene>
<comment type="subcellular location">
    <subcellularLocation>
        <location evidence="1">Cytoplasm</location>
    </subcellularLocation>
</comment>
<comment type="similarity">
    <text evidence="1">Belongs to the TACO1 family. YeeN subfamily.</text>
</comment>
<organism>
    <name type="scientific">Bacillus pumilus (strain SAFR-032)</name>
    <dbReference type="NCBI Taxonomy" id="315750"/>
    <lineage>
        <taxon>Bacteria</taxon>
        <taxon>Bacillati</taxon>
        <taxon>Bacillota</taxon>
        <taxon>Bacilli</taxon>
        <taxon>Bacillales</taxon>
        <taxon>Bacillaceae</taxon>
        <taxon>Bacillus</taxon>
    </lineage>
</organism>
<reference key="1">
    <citation type="journal article" date="2007" name="PLoS ONE">
        <title>Paradoxical DNA repair and peroxide resistance gene conservation in Bacillus pumilus SAFR-032.</title>
        <authorList>
            <person name="Gioia J."/>
            <person name="Yerrapragada S."/>
            <person name="Qin X."/>
            <person name="Jiang H."/>
            <person name="Igboeli O.C."/>
            <person name="Muzny D."/>
            <person name="Dugan-Rocha S."/>
            <person name="Ding Y."/>
            <person name="Hawes A."/>
            <person name="Liu W."/>
            <person name="Perez L."/>
            <person name="Kovar C."/>
            <person name="Dinh H."/>
            <person name="Lee S."/>
            <person name="Nazareth L."/>
            <person name="Blyth P."/>
            <person name="Holder M."/>
            <person name="Buhay C."/>
            <person name="Tirumalai M.R."/>
            <person name="Liu Y."/>
            <person name="Dasgupta I."/>
            <person name="Bokhetache L."/>
            <person name="Fujita M."/>
            <person name="Karouia F."/>
            <person name="Eswara Moorthy P."/>
            <person name="Siefert J."/>
            <person name="Uzman A."/>
            <person name="Buzumbo P."/>
            <person name="Verma A."/>
            <person name="Zwiya H."/>
            <person name="McWilliams B.D."/>
            <person name="Olowu A."/>
            <person name="Clinkenbeard K.D."/>
            <person name="Newcombe D."/>
            <person name="Golebiewski L."/>
            <person name="Petrosino J.F."/>
            <person name="Nicholson W.L."/>
            <person name="Fox G.E."/>
            <person name="Venkateswaran K."/>
            <person name="Highlander S.K."/>
            <person name="Weinstock G.M."/>
        </authorList>
    </citation>
    <scope>NUCLEOTIDE SEQUENCE [LARGE SCALE GENOMIC DNA]</scope>
    <source>
        <strain>SAFR-032</strain>
    </source>
</reference>
<keyword id="KW-0963">Cytoplasm</keyword>
<keyword id="KW-0238">DNA-binding</keyword>
<keyword id="KW-0804">Transcription</keyword>
<keyword id="KW-0805">Transcription regulation</keyword>
<sequence length="239" mass="26736">MGRKWNNIKEKKASKDASTSRIYAKFGREIYVAAKQGEPNPESNQALRFVLERAKTYSVPKHIVDRAIEKAKGGAEENFDELRYEGFGPNGSMVIVDALTNNVNRTASDVRAAFGKNGGNMGVSGSVAYMFDQTAVIGVEGKSEEETLELLMEADVDVRDIMEEDETVIVYAEPDQFHQVQEAFKQAGVEEFTVAEITMLPQNEVTLDDESKEQFEKLIDVLEELEDVQQVYHNVDLGE</sequence>
<protein>
    <recommendedName>
        <fullName evidence="1">Probable transcriptional regulatory protein BPUM_0743</fullName>
    </recommendedName>
</protein>
<evidence type="ECO:0000255" key="1">
    <source>
        <dbReference type="HAMAP-Rule" id="MF_00918"/>
    </source>
</evidence>
<feature type="chain" id="PRO_1000062036" description="Probable transcriptional regulatory protein BPUM_0743">
    <location>
        <begin position="1"/>
        <end position="239"/>
    </location>
</feature>
<name>Y743_BACP2</name>
<accession>A8FB12</accession>
<proteinExistence type="inferred from homology"/>